<organism>
    <name type="scientific">Influenza A virus (strain A/Chicken/Hong Kong/715.5/2001 H5N1 genotype E)</name>
    <dbReference type="NCBI Taxonomy" id="196434"/>
    <lineage>
        <taxon>Viruses</taxon>
        <taxon>Riboviria</taxon>
        <taxon>Orthornavirae</taxon>
        <taxon>Negarnaviricota</taxon>
        <taxon>Polyploviricotina</taxon>
        <taxon>Insthoviricetes</taxon>
        <taxon>Articulavirales</taxon>
        <taxon>Orthomyxoviridae</taxon>
        <taxon>Alphainfluenzavirus</taxon>
        <taxon>Alphainfluenzavirus influenzae</taxon>
        <taxon>Influenza A virus</taxon>
    </lineage>
</organism>
<dbReference type="EMBL" id="AF509204">
    <property type="status" value="NOT_ANNOTATED_CDS"/>
    <property type="molecule type" value="Genomic_DNA"/>
</dbReference>
<dbReference type="SMR" id="P0CK72"/>
<dbReference type="GO" id="GO:0003723">
    <property type="term" value="F:RNA binding"/>
    <property type="evidence" value="ECO:0007669"/>
    <property type="project" value="InterPro"/>
</dbReference>
<dbReference type="GO" id="GO:0039694">
    <property type="term" value="P:viral RNA genome replication"/>
    <property type="evidence" value="ECO:0007669"/>
    <property type="project" value="InterPro"/>
</dbReference>
<dbReference type="GO" id="GO:0075523">
    <property type="term" value="P:viral translational frameshifting"/>
    <property type="evidence" value="ECO:0007669"/>
    <property type="project" value="UniProtKB-KW"/>
</dbReference>
<dbReference type="FunFam" id="3.40.91.90:FF:000001">
    <property type="entry name" value="Polymerase acidic protein"/>
    <property type="match status" value="1"/>
</dbReference>
<dbReference type="Gene3D" id="3.40.91.90">
    <property type="entry name" value="Influenza RNA-dependent RNA polymerase subunit PA, endonuclease domain"/>
    <property type="match status" value="1"/>
</dbReference>
<dbReference type="InterPro" id="IPR001009">
    <property type="entry name" value="PA/PA-X"/>
</dbReference>
<dbReference type="InterPro" id="IPR038372">
    <property type="entry name" value="PA/PA-X_sf"/>
</dbReference>
<dbReference type="Pfam" id="PF00603">
    <property type="entry name" value="Flu_PA"/>
    <property type="match status" value="1"/>
</dbReference>
<name>PAX_I01A3</name>
<proteinExistence type="inferred from homology"/>
<keyword id="KW-1132">Decay of host mRNAs by virus</keyword>
<keyword id="KW-1262">Eukaryotic host gene expression shutoff by virus</keyword>
<keyword id="KW-1035">Host cytoplasm</keyword>
<keyword id="KW-1190">Host gene expression shutoff by virus</keyword>
<keyword id="KW-1192">Host mRNA suppression by virus</keyword>
<keyword id="KW-1048">Host nucleus</keyword>
<keyword id="KW-0945">Host-virus interaction</keyword>
<keyword id="KW-0688">Ribosomal frameshifting</keyword>
<accession>P0CK72</accession>
<gene>
    <name type="primary">PA</name>
</gene>
<organismHost>
    <name type="scientific">Aves</name>
    <dbReference type="NCBI Taxonomy" id="8782"/>
</organismHost>
<organismHost>
    <name type="scientific">Felis catus</name>
    <name type="common">Cat</name>
    <name type="synonym">Felis silvestris catus</name>
    <dbReference type="NCBI Taxonomy" id="9685"/>
</organismHost>
<organismHost>
    <name type="scientific">Homo sapiens</name>
    <name type="common">Human</name>
    <dbReference type="NCBI Taxonomy" id="9606"/>
</organismHost>
<organismHost>
    <name type="scientific">Panthera pardus</name>
    <name type="common">Leopard</name>
    <name type="synonym">Felis pardus</name>
    <dbReference type="NCBI Taxonomy" id="9691"/>
</organismHost>
<organismHost>
    <name type="scientific">Panthera tigris</name>
    <name type="common">Tiger</name>
    <dbReference type="NCBI Taxonomy" id="9694"/>
</organismHost>
<organismHost>
    <name type="scientific">Sus scrofa</name>
    <name type="common">Pig</name>
    <dbReference type="NCBI Taxonomy" id="9823"/>
</organismHost>
<feature type="chain" id="PRO_0000419355" description="Protein PA-X">
    <location>
        <begin position="1"/>
        <end position="252"/>
    </location>
</feature>
<feature type="active site" evidence="2">
    <location>
        <position position="80"/>
    </location>
</feature>
<feature type="active site" evidence="2">
    <location>
        <position position="108"/>
    </location>
</feature>
<feature type="site" description="Important for efficient shutoff activity and nuclear localization" evidence="4">
    <location>
        <position position="195"/>
    </location>
</feature>
<feature type="site" description="Important for efficient shutoff activity and nuclear localization" evidence="4">
    <location>
        <position position="198"/>
    </location>
</feature>
<feature type="site" description="Important for efficient shutoff activity and nuclear localization" evidence="4">
    <location>
        <position position="199"/>
    </location>
</feature>
<feature type="site" description="Important for efficient shutoff activity" evidence="3">
    <location>
        <position position="202"/>
    </location>
</feature>
<feature type="site" description="Important for efficient shutoff activity" evidence="3">
    <location>
        <position position="203"/>
    </location>
</feature>
<feature type="site" description="Important for efficient shutoff activity" evidence="3">
    <location>
        <position position="206"/>
    </location>
</feature>
<protein>
    <recommendedName>
        <fullName>Protein PA-X</fullName>
    </recommendedName>
</protein>
<sequence length="252" mass="29395">MEDFVRQCFNPMIVELAEKAMKEYGEDPKIETNKFAAICTHLEVCFMYSDFHFIDERGESTIVESSDPNALLKHRFEIIEGRDRTMAWTVVNSICNTTGVEKPKFLPDLYDYKENRFIEIGVTRREVHTYYLEKANKIKSEKTHIHIFSFTGEEMATKADYTLDEESRARIKTRLYTIRQEMASRGLWDSFVNPREAKRQLKKDLKSLEPCAGLPTKVSHRTSPALKTLEPMWMDSNRTAALRASFLKCQKK</sequence>
<comment type="function">
    <text evidence="1 4">Plays a major role in the shutoff of the host protein expression by cleaving mRNAs probably via an endonuclease activity. This host shutoff allows the virus to escape from the host antiviral response (By similarity). Hijacks host RNA splicing machinery to selectively target host RNAs containing introns for destruction. This may explain the preferential degradation of RNAs that have undergone co- or post-transcriptional processing (By similarity).</text>
</comment>
<comment type="subcellular location">
    <subcellularLocation>
        <location evidence="4">Host cytoplasm</location>
    </subcellularLocation>
    <subcellularLocation>
        <location evidence="4">Host nucleus</location>
    </subcellularLocation>
</comment>
<comment type="alternative products">
    <event type="ribosomal frameshifting"/>
    <isoform>
        <id>P0CK72-1</id>
        <name>PA-X</name>
        <sequence type="displayed"/>
    </isoform>
    <isoform>
        <id>Q809J3-1</id>
        <name>PA</name>
        <sequence type="external"/>
    </isoform>
</comment>
<comment type="domain">
    <text evidence="1 4">The probable endonuclease active site in the N-terminus and the basic amino acid cluster in the C-terminus are important for the shutoff activity. The C-terminus acts as a nuclear localization signal (By similarity). The C-terminus is recruited to host protein complexes involved in nuclear Pol II RNA processing (By similarity).</text>
</comment>
<comment type="similarity">
    <text evidence="5">Belongs to the influenza viruses PA-X family.</text>
</comment>
<reference key="1">
    <citation type="journal article" date="2002" name="Proc. Natl. Acad. Sci. U.S.A.">
        <title>Emergence of multiple genotypes of H5N1 avian influenza viruses in Hong Kong SAR.</title>
        <authorList>
            <person name="Guan Y."/>
            <person name="Peiris J.S.M."/>
            <person name="Lipatov A.S."/>
            <person name="Ellis T.M."/>
            <person name="Dyrting K.C."/>
            <person name="Krauss S."/>
            <person name="Zhang L.J."/>
            <person name="Webster R.G."/>
            <person name="Shortridge K.F."/>
        </authorList>
    </citation>
    <scope>NUCLEOTIDE SEQUENCE [GENOMIC RNA]</scope>
</reference>
<reference key="2">
    <citation type="submission" date="2008-03" db="EMBL/GenBank/DDBJ databases">
        <authorList>
            <person name="Li K.S."/>
            <person name="Xu K.M."/>
            <person name="Guan Y."/>
        </authorList>
    </citation>
    <scope>SEQUENCE REVISION</scope>
</reference>
<evidence type="ECO:0000250" key="1">
    <source>
        <dbReference type="UniProtKB" id="P0CK64"/>
    </source>
</evidence>
<evidence type="ECO:0000250" key="2">
    <source>
        <dbReference type="UniProtKB" id="P0CK68"/>
    </source>
</evidence>
<evidence type="ECO:0000250" key="3">
    <source>
        <dbReference type="UniProtKB" id="P0DJW8"/>
    </source>
</evidence>
<evidence type="ECO:0000250" key="4">
    <source>
        <dbReference type="UniProtKB" id="P0DXO5"/>
    </source>
</evidence>
<evidence type="ECO:0000305" key="5"/>